<reference key="1">
    <citation type="journal article" date="2005" name="Nucleic Acids Res.">
        <title>Genome dynamics and diversity of Shigella species, the etiologic agents of bacillary dysentery.</title>
        <authorList>
            <person name="Yang F."/>
            <person name="Yang J."/>
            <person name="Zhang X."/>
            <person name="Chen L."/>
            <person name="Jiang Y."/>
            <person name="Yan Y."/>
            <person name="Tang X."/>
            <person name="Wang J."/>
            <person name="Xiong Z."/>
            <person name="Dong J."/>
            <person name="Xue Y."/>
            <person name="Zhu Y."/>
            <person name="Xu X."/>
            <person name="Sun L."/>
            <person name="Chen S."/>
            <person name="Nie H."/>
            <person name="Peng J."/>
            <person name="Xu J."/>
            <person name="Wang Y."/>
            <person name="Yuan Z."/>
            <person name="Wen Y."/>
            <person name="Yao Z."/>
            <person name="Shen Y."/>
            <person name="Qiang B."/>
            <person name="Hou Y."/>
            <person name="Yu J."/>
            <person name="Jin Q."/>
        </authorList>
    </citation>
    <scope>NUCLEOTIDE SEQUENCE [LARGE SCALE GENOMIC DNA]</scope>
    <source>
        <strain>Sd197</strain>
    </source>
</reference>
<proteinExistence type="inferred from homology"/>
<organism>
    <name type="scientific">Shigella dysenteriae serotype 1 (strain Sd197)</name>
    <dbReference type="NCBI Taxonomy" id="300267"/>
    <lineage>
        <taxon>Bacteria</taxon>
        <taxon>Pseudomonadati</taxon>
        <taxon>Pseudomonadota</taxon>
        <taxon>Gammaproteobacteria</taxon>
        <taxon>Enterobacterales</taxon>
        <taxon>Enterobacteriaceae</taxon>
        <taxon>Shigella</taxon>
    </lineage>
</organism>
<accession>Q32FB8</accession>
<evidence type="ECO:0000255" key="1">
    <source>
        <dbReference type="HAMAP-Rule" id="MF_00157"/>
    </source>
</evidence>
<dbReference type="EC" id="3.1.13.-" evidence="1"/>
<dbReference type="EMBL" id="CP000034">
    <property type="protein sequence ID" value="ABB61987.1"/>
    <property type="molecule type" value="Genomic_DNA"/>
</dbReference>
<dbReference type="RefSeq" id="WP_001282281.1">
    <property type="nucleotide sequence ID" value="NC_007606.1"/>
</dbReference>
<dbReference type="RefSeq" id="YP_403478.1">
    <property type="nucleotide sequence ID" value="NC_007606.1"/>
</dbReference>
<dbReference type="SMR" id="Q32FB8"/>
<dbReference type="STRING" id="300267.SDY_1878"/>
<dbReference type="EnsemblBacteria" id="ABB61987">
    <property type="protein sequence ID" value="ABB61987"/>
    <property type="gene ID" value="SDY_1878"/>
</dbReference>
<dbReference type="GeneID" id="93775806"/>
<dbReference type="KEGG" id="sdy:SDY_1878"/>
<dbReference type="PATRIC" id="fig|300267.13.peg.2257"/>
<dbReference type="HOGENOM" id="CLU_082724_0_0_6"/>
<dbReference type="Proteomes" id="UP000002716">
    <property type="component" value="Chromosome"/>
</dbReference>
<dbReference type="GO" id="GO:0005829">
    <property type="term" value="C:cytosol"/>
    <property type="evidence" value="ECO:0007669"/>
    <property type="project" value="TreeGrafter"/>
</dbReference>
<dbReference type="GO" id="GO:0008408">
    <property type="term" value="F:3'-5' exonuclease activity"/>
    <property type="evidence" value="ECO:0007669"/>
    <property type="project" value="TreeGrafter"/>
</dbReference>
<dbReference type="GO" id="GO:0000287">
    <property type="term" value="F:magnesium ion binding"/>
    <property type="evidence" value="ECO:0007669"/>
    <property type="project" value="UniProtKB-UniRule"/>
</dbReference>
<dbReference type="GO" id="GO:0003676">
    <property type="term" value="F:nucleic acid binding"/>
    <property type="evidence" value="ECO:0007669"/>
    <property type="project" value="InterPro"/>
</dbReference>
<dbReference type="GO" id="GO:0016896">
    <property type="term" value="F:RNA exonuclease activity, producing 5'-phosphomonoesters"/>
    <property type="evidence" value="ECO:0007669"/>
    <property type="project" value="UniProtKB-UniRule"/>
</dbReference>
<dbReference type="GO" id="GO:0045004">
    <property type="term" value="P:DNA replication proofreading"/>
    <property type="evidence" value="ECO:0007669"/>
    <property type="project" value="TreeGrafter"/>
</dbReference>
<dbReference type="GO" id="GO:0008033">
    <property type="term" value="P:tRNA processing"/>
    <property type="evidence" value="ECO:0007669"/>
    <property type="project" value="UniProtKB-KW"/>
</dbReference>
<dbReference type="CDD" id="cd06134">
    <property type="entry name" value="RNaseT"/>
    <property type="match status" value="1"/>
</dbReference>
<dbReference type="FunFam" id="3.30.420.10:FF:000009">
    <property type="entry name" value="Ribonuclease T"/>
    <property type="match status" value="1"/>
</dbReference>
<dbReference type="Gene3D" id="3.30.420.10">
    <property type="entry name" value="Ribonuclease H-like superfamily/Ribonuclease H"/>
    <property type="match status" value="1"/>
</dbReference>
<dbReference type="HAMAP" id="MF_00157">
    <property type="entry name" value="RNase_T"/>
    <property type="match status" value="1"/>
</dbReference>
<dbReference type="InterPro" id="IPR013520">
    <property type="entry name" value="Exonuclease_RNaseT/DNA_pol3"/>
</dbReference>
<dbReference type="InterPro" id="IPR005987">
    <property type="entry name" value="RNase_T"/>
</dbReference>
<dbReference type="InterPro" id="IPR012337">
    <property type="entry name" value="RNaseH-like_sf"/>
</dbReference>
<dbReference type="InterPro" id="IPR036397">
    <property type="entry name" value="RNaseH_sf"/>
</dbReference>
<dbReference type="NCBIfam" id="TIGR01298">
    <property type="entry name" value="RNaseT"/>
    <property type="match status" value="1"/>
</dbReference>
<dbReference type="PANTHER" id="PTHR30231">
    <property type="entry name" value="DNA POLYMERASE III SUBUNIT EPSILON"/>
    <property type="match status" value="1"/>
</dbReference>
<dbReference type="PANTHER" id="PTHR30231:SF2">
    <property type="entry name" value="RIBONUCLEASE T"/>
    <property type="match status" value="1"/>
</dbReference>
<dbReference type="Pfam" id="PF00929">
    <property type="entry name" value="RNase_T"/>
    <property type="match status" value="1"/>
</dbReference>
<dbReference type="SMART" id="SM00479">
    <property type="entry name" value="EXOIII"/>
    <property type="match status" value="1"/>
</dbReference>
<dbReference type="SUPFAM" id="SSF53098">
    <property type="entry name" value="Ribonuclease H-like"/>
    <property type="match status" value="1"/>
</dbReference>
<comment type="function">
    <text evidence="1">Trims short 3' overhangs of a variety of RNA species, leaving a one or two nucleotide 3' overhang. Responsible for the end-turnover of tRNA: specifically removes the terminal AMP residue from uncharged tRNA (tRNA-C-C-A). Also appears to be involved in tRNA biosynthesis.</text>
</comment>
<comment type="cofactor">
    <cofactor evidence="1">
        <name>Mg(2+)</name>
        <dbReference type="ChEBI" id="CHEBI:18420"/>
    </cofactor>
    <text evidence="1">Binds two Mg(2+) per subunit. The active form of the enzyme binds two Mg(2+) ions in its active site. The first Mg(2+) forms only one salt bridge with the protein.</text>
</comment>
<comment type="subunit">
    <text evidence="1">Homodimer.</text>
</comment>
<comment type="similarity">
    <text evidence="1">Belongs to the RNase T family.</text>
</comment>
<protein>
    <recommendedName>
        <fullName evidence="1">Ribonuclease T</fullName>
        <ecNumber evidence="1">3.1.13.-</ecNumber>
    </recommendedName>
    <alternativeName>
        <fullName evidence="1">Exoribonuclease T</fullName>
        <shortName evidence="1">RNase T</shortName>
    </alternativeName>
</protein>
<feature type="chain" id="PRO_1000011422" description="Ribonuclease T">
    <location>
        <begin position="1"/>
        <end position="215"/>
    </location>
</feature>
<feature type="domain" description="Exonuclease" evidence="1">
    <location>
        <begin position="20"/>
        <end position="194"/>
    </location>
</feature>
<feature type="active site" description="Proton donor/acceptor" evidence="1">
    <location>
        <position position="181"/>
    </location>
</feature>
<feature type="binding site" evidence="1">
    <location>
        <position position="23"/>
    </location>
    <ligand>
        <name>Mg(2+)</name>
        <dbReference type="ChEBI" id="CHEBI:18420"/>
        <label>1</label>
        <note>catalytic</note>
    </ligand>
</feature>
<feature type="binding site" evidence="1">
    <location>
        <position position="23"/>
    </location>
    <ligand>
        <name>Mg(2+)</name>
        <dbReference type="ChEBI" id="CHEBI:18420"/>
        <label>2</label>
        <note>catalytic</note>
    </ligand>
</feature>
<feature type="binding site" evidence="1">
    <location>
        <position position="25"/>
    </location>
    <ligand>
        <name>Mg(2+)</name>
        <dbReference type="ChEBI" id="CHEBI:18420"/>
        <label>2</label>
        <note>catalytic</note>
    </ligand>
</feature>
<feature type="binding site" evidence="1">
    <location>
        <position position="181"/>
    </location>
    <ligand>
        <name>Mg(2+)</name>
        <dbReference type="ChEBI" id="CHEBI:18420"/>
        <label>2</label>
        <note>catalytic</note>
    </ligand>
</feature>
<feature type="binding site" evidence="1">
    <location>
        <position position="186"/>
    </location>
    <ligand>
        <name>Mg(2+)</name>
        <dbReference type="ChEBI" id="CHEBI:18420"/>
        <label>2</label>
        <note>catalytic</note>
    </ligand>
</feature>
<feature type="site" description="Important for substrate binding and specificity" evidence="1">
    <location>
        <position position="29"/>
    </location>
</feature>
<feature type="site" description="Important for substrate binding and specificity" evidence="1">
    <location>
        <position position="77"/>
    </location>
</feature>
<feature type="site" description="Important for substrate binding and specificity" evidence="1">
    <location>
        <position position="124"/>
    </location>
</feature>
<feature type="site" description="Important for substrate binding and specificity" evidence="1">
    <location>
        <position position="146"/>
    </location>
</feature>
<name>RNT_SHIDS</name>
<gene>
    <name evidence="1" type="primary">rnt</name>
    <name type="ordered locus">SDY_1878</name>
</gene>
<keyword id="KW-0269">Exonuclease</keyword>
<keyword id="KW-0378">Hydrolase</keyword>
<keyword id="KW-0460">Magnesium</keyword>
<keyword id="KW-0479">Metal-binding</keyword>
<keyword id="KW-0540">Nuclease</keyword>
<keyword id="KW-1185">Reference proteome</keyword>
<keyword id="KW-0819">tRNA processing</keyword>
<sequence>MSDNAQLTGLCDRFRGFYPVVIDVETAGFNAKTDALLEIAAITLKMDEQGWLMPDTTLHFHVEPFVGANLQPEALAFNGIDPNDPDRGAVSEYEALHEIFKVVRKGIKASGCNRAIMVAHNANFDHSFMMAAAERASLKRNPFHPFATFDTAALAGLALGQTVLSKACQTAGMDFDSTQAHSALYDTERTAVLFCEIVNRWKRLGGWPLPAAEEV</sequence>